<feature type="chain" id="PRO_1000077637" description="NH(3)-dependent NAD(+) synthetase">
    <location>
        <begin position="1"/>
        <end position="276"/>
    </location>
</feature>
<feature type="binding site" evidence="1">
    <location>
        <begin position="43"/>
        <end position="50"/>
    </location>
    <ligand>
        <name>ATP</name>
        <dbReference type="ChEBI" id="CHEBI:30616"/>
    </ligand>
</feature>
<feature type="binding site" evidence="1">
    <location>
        <position position="49"/>
    </location>
    <ligand>
        <name>Mg(2+)</name>
        <dbReference type="ChEBI" id="CHEBI:18420"/>
    </ligand>
</feature>
<feature type="binding site" evidence="1">
    <location>
        <position position="146"/>
    </location>
    <ligand>
        <name>deamido-NAD(+)</name>
        <dbReference type="ChEBI" id="CHEBI:58437"/>
    </ligand>
</feature>
<feature type="binding site" evidence="1">
    <location>
        <position position="166"/>
    </location>
    <ligand>
        <name>ATP</name>
        <dbReference type="ChEBI" id="CHEBI:30616"/>
    </ligand>
</feature>
<feature type="binding site" evidence="1">
    <location>
        <position position="171"/>
    </location>
    <ligand>
        <name>Mg(2+)</name>
        <dbReference type="ChEBI" id="CHEBI:18420"/>
    </ligand>
</feature>
<feature type="binding site" evidence="1">
    <location>
        <position position="179"/>
    </location>
    <ligand>
        <name>deamido-NAD(+)</name>
        <dbReference type="ChEBI" id="CHEBI:58437"/>
    </ligand>
</feature>
<feature type="binding site" evidence="1">
    <location>
        <position position="186"/>
    </location>
    <ligand>
        <name>deamido-NAD(+)</name>
        <dbReference type="ChEBI" id="CHEBI:58437"/>
    </ligand>
</feature>
<feature type="binding site" evidence="1">
    <location>
        <position position="195"/>
    </location>
    <ligand>
        <name>ATP</name>
        <dbReference type="ChEBI" id="CHEBI:30616"/>
    </ligand>
</feature>
<feature type="binding site" evidence="1">
    <location>
        <position position="217"/>
    </location>
    <ligand>
        <name>ATP</name>
        <dbReference type="ChEBI" id="CHEBI:30616"/>
    </ligand>
</feature>
<feature type="binding site" evidence="1">
    <location>
        <begin position="266"/>
        <end position="267"/>
    </location>
    <ligand>
        <name>deamido-NAD(+)</name>
        <dbReference type="ChEBI" id="CHEBI:58437"/>
    </ligand>
</feature>
<sequence length="276" mass="30085">MEQSIRDEMRVLPSIDPHFEIERRVAFIKRKLQDSGCKSLVLGISGGVDSTTCGRLAQLAVDQLNEESDDNGYQFIAVRLPYGEQKDEDEAQLALDFIQPTHSVSVNIKAGVDGLHAASHVALEGTGLLPTDAAKVDLVKGNVKARARMVAQYEIAGYVGGLVLGTDHSAENITGFYTKFGDGACDMAPLFGLSKRQVREVAATLGAPELLVKKVPTADLEELAPQKADEDALSLTYEQIDDFLEGKPVSQEVSDRLVAIYKMTQHKRQPIPTIYD</sequence>
<dbReference type="EC" id="6.3.1.5" evidence="1"/>
<dbReference type="EMBL" id="CP000790">
    <property type="protein sequence ID" value="ABU73136.1"/>
    <property type="molecule type" value="Genomic_DNA"/>
</dbReference>
<dbReference type="RefSeq" id="WP_011999469.1">
    <property type="nucleotide sequence ID" value="NC_009784.1"/>
</dbReference>
<dbReference type="SMR" id="A7N654"/>
<dbReference type="KEGG" id="vha:VIBHAR_05230"/>
<dbReference type="PATRIC" id="fig|338187.25.peg.4992"/>
<dbReference type="UniPathway" id="UPA00253">
    <property type="reaction ID" value="UER00333"/>
</dbReference>
<dbReference type="Proteomes" id="UP000008152">
    <property type="component" value="Chromosome II"/>
</dbReference>
<dbReference type="GO" id="GO:0005737">
    <property type="term" value="C:cytoplasm"/>
    <property type="evidence" value="ECO:0007669"/>
    <property type="project" value="InterPro"/>
</dbReference>
<dbReference type="GO" id="GO:0005524">
    <property type="term" value="F:ATP binding"/>
    <property type="evidence" value="ECO:0007669"/>
    <property type="project" value="UniProtKB-UniRule"/>
</dbReference>
<dbReference type="GO" id="GO:0004359">
    <property type="term" value="F:glutaminase activity"/>
    <property type="evidence" value="ECO:0007669"/>
    <property type="project" value="InterPro"/>
</dbReference>
<dbReference type="GO" id="GO:0046872">
    <property type="term" value="F:metal ion binding"/>
    <property type="evidence" value="ECO:0007669"/>
    <property type="project" value="UniProtKB-KW"/>
</dbReference>
<dbReference type="GO" id="GO:0003952">
    <property type="term" value="F:NAD+ synthase (glutamine-hydrolyzing) activity"/>
    <property type="evidence" value="ECO:0007669"/>
    <property type="project" value="InterPro"/>
</dbReference>
<dbReference type="GO" id="GO:0008795">
    <property type="term" value="F:NAD+ synthase activity"/>
    <property type="evidence" value="ECO:0007669"/>
    <property type="project" value="UniProtKB-UniRule"/>
</dbReference>
<dbReference type="GO" id="GO:0009435">
    <property type="term" value="P:NAD biosynthetic process"/>
    <property type="evidence" value="ECO:0007669"/>
    <property type="project" value="UniProtKB-UniRule"/>
</dbReference>
<dbReference type="CDD" id="cd00553">
    <property type="entry name" value="NAD_synthase"/>
    <property type="match status" value="1"/>
</dbReference>
<dbReference type="FunFam" id="3.40.50.620:FF:000015">
    <property type="entry name" value="NH(3)-dependent NAD(+) synthetase"/>
    <property type="match status" value="1"/>
</dbReference>
<dbReference type="Gene3D" id="3.40.50.620">
    <property type="entry name" value="HUPs"/>
    <property type="match status" value="1"/>
</dbReference>
<dbReference type="HAMAP" id="MF_00193">
    <property type="entry name" value="NadE_ammonia_dep"/>
    <property type="match status" value="1"/>
</dbReference>
<dbReference type="InterPro" id="IPR022310">
    <property type="entry name" value="NAD/GMP_synthase"/>
</dbReference>
<dbReference type="InterPro" id="IPR003694">
    <property type="entry name" value="NAD_synthase"/>
</dbReference>
<dbReference type="InterPro" id="IPR022926">
    <property type="entry name" value="NH(3)-dep_NAD(+)_synth"/>
</dbReference>
<dbReference type="InterPro" id="IPR014729">
    <property type="entry name" value="Rossmann-like_a/b/a_fold"/>
</dbReference>
<dbReference type="NCBIfam" id="TIGR00552">
    <property type="entry name" value="nadE"/>
    <property type="match status" value="1"/>
</dbReference>
<dbReference type="NCBIfam" id="NF001979">
    <property type="entry name" value="PRK00768.1"/>
    <property type="match status" value="1"/>
</dbReference>
<dbReference type="PANTHER" id="PTHR23090">
    <property type="entry name" value="NH 3 /GLUTAMINE-DEPENDENT NAD + SYNTHETASE"/>
    <property type="match status" value="1"/>
</dbReference>
<dbReference type="PANTHER" id="PTHR23090:SF7">
    <property type="entry name" value="NH(3)-DEPENDENT NAD(+) SYNTHETASE"/>
    <property type="match status" value="1"/>
</dbReference>
<dbReference type="Pfam" id="PF02540">
    <property type="entry name" value="NAD_synthase"/>
    <property type="match status" value="1"/>
</dbReference>
<dbReference type="SUPFAM" id="SSF52402">
    <property type="entry name" value="Adenine nucleotide alpha hydrolases-like"/>
    <property type="match status" value="1"/>
</dbReference>
<keyword id="KW-0067">ATP-binding</keyword>
<keyword id="KW-0436">Ligase</keyword>
<keyword id="KW-0460">Magnesium</keyword>
<keyword id="KW-0479">Metal-binding</keyword>
<keyword id="KW-0520">NAD</keyword>
<keyword id="KW-0547">Nucleotide-binding</keyword>
<comment type="function">
    <text evidence="1">Catalyzes the ATP-dependent amidation of deamido-NAD to form NAD. Uses ammonia as a nitrogen source.</text>
</comment>
<comment type="catalytic activity">
    <reaction evidence="1">
        <text>deamido-NAD(+) + NH4(+) + ATP = AMP + diphosphate + NAD(+) + H(+)</text>
        <dbReference type="Rhea" id="RHEA:21188"/>
        <dbReference type="ChEBI" id="CHEBI:15378"/>
        <dbReference type="ChEBI" id="CHEBI:28938"/>
        <dbReference type="ChEBI" id="CHEBI:30616"/>
        <dbReference type="ChEBI" id="CHEBI:33019"/>
        <dbReference type="ChEBI" id="CHEBI:57540"/>
        <dbReference type="ChEBI" id="CHEBI:58437"/>
        <dbReference type="ChEBI" id="CHEBI:456215"/>
        <dbReference type="EC" id="6.3.1.5"/>
    </reaction>
</comment>
<comment type="pathway">
    <text evidence="1">Cofactor biosynthesis; NAD(+) biosynthesis; NAD(+) from deamido-NAD(+) (ammonia route): step 1/1.</text>
</comment>
<comment type="subunit">
    <text evidence="1">Homodimer.</text>
</comment>
<comment type="similarity">
    <text evidence="1">Belongs to the NAD synthetase family.</text>
</comment>
<accession>A7N654</accession>
<proteinExistence type="inferred from homology"/>
<gene>
    <name evidence="1" type="primary">nadE</name>
    <name type="ordered locus">VIBHAR_05230</name>
</gene>
<reference key="1">
    <citation type="submission" date="2007-08" db="EMBL/GenBank/DDBJ databases">
        <authorList>
            <consortium name="The Vibrio harveyi Genome Sequencing Project"/>
            <person name="Bassler B."/>
            <person name="Clifton S.W."/>
            <person name="Fulton L."/>
            <person name="Delehaunty K."/>
            <person name="Fronick C."/>
            <person name="Harrison M."/>
            <person name="Markivic C."/>
            <person name="Fulton R."/>
            <person name="Tin-Wollam A.-M."/>
            <person name="Shah N."/>
            <person name="Pepin K."/>
            <person name="Nash W."/>
            <person name="Thiruvilangam P."/>
            <person name="Bhonagiri V."/>
            <person name="Waters C."/>
            <person name="Tu K.C."/>
            <person name="Irgon J."/>
            <person name="Wilson R.K."/>
        </authorList>
    </citation>
    <scope>NUCLEOTIDE SEQUENCE [LARGE SCALE GENOMIC DNA]</scope>
    <source>
        <strain>ATCC BAA-1116 / BB120</strain>
    </source>
</reference>
<organism>
    <name type="scientific">Vibrio campbellii (strain ATCC BAA-1116)</name>
    <dbReference type="NCBI Taxonomy" id="2902295"/>
    <lineage>
        <taxon>Bacteria</taxon>
        <taxon>Pseudomonadati</taxon>
        <taxon>Pseudomonadota</taxon>
        <taxon>Gammaproteobacteria</taxon>
        <taxon>Vibrionales</taxon>
        <taxon>Vibrionaceae</taxon>
        <taxon>Vibrio</taxon>
    </lineage>
</organism>
<evidence type="ECO:0000255" key="1">
    <source>
        <dbReference type="HAMAP-Rule" id="MF_00193"/>
    </source>
</evidence>
<protein>
    <recommendedName>
        <fullName evidence="1">NH(3)-dependent NAD(+) synthetase</fullName>
        <ecNumber evidence="1">6.3.1.5</ecNumber>
    </recommendedName>
</protein>
<name>NADE_VIBC1</name>